<gene>
    <name evidence="1" type="primary">ubiC</name>
    <name type="ordered locus">BPP1450</name>
</gene>
<keyword id="KW-0963">Cytoplasm</keyword>
<keyword id="KW-0456">Lyase</keyword>
<keyword id="KW-0670">Pyruvate</keyword>
<keyword id="KW-0831">Ubiquinone biosynthesis</keyword>
<evidence type="ECO:0000255" key="1">
    <source>
        <dbReference type="HAMAP-Rule" id="MF_01632"/>
    </source>
</evidence>
<name>UBIC_BORPA</name>
<sequence>MTTPIPLARGWLPAAPSTLDPLRKYWLFRPGALTAGLRQLGHVRLRVLAEYPTGAPRDEADGMRIAAQSPVWVREVLMSIDGVDSVVARSLTPLRASHGVWQGMRRLLTRPLADMLYHDPGIHRSVFVCRRLAAGVPFHATAIARAPAGGPEPALWARRSAFWRAGQPLLVAECFLPAFWSLARAPVAPR</sequence>
<accession>Q7WAC9</accession>
<protein>
    <recommendedName>
        <fullName evidence="1">Probable chorismate pyruvate-lyase</fullName>
        <shortName evidence="1">CL</shortName>
        <shortName evidence="1">CPL</shortName>
        <ecNumber evidence="1">4.1.3.40</ecNumber>
    </recommendedName>
</protein>
<proteinExistence type="inferred from homology"/>
<comment type="function">
    <text evidence="1">Removes the pyruvyl group from chorismate, with concomitant aromatization of the ring, to provide 4-hydroxybenzoate (4HB) for the ubiquinone pathway.</text>
</comment>
<comment type="catalytic activity">
    <reaction evidence="1">
        <text>chorismate = 4-hydroxybenzoate + pyruvate</text>
        <dbReference type="Rhea" id="RHEA:16505"/>
        <dbReference type="ChEBI" id="CHEBI:15361"/>
        <dbReference type="ChEBI" id="CHEBI:17879"/>
        <dbReference type="ChEBI" id="CHEBI:29748"/>
        <dbReference type="EC" id="4.1.3.40"/>
    </reaction>
</comment>
<comment type="pathway">
    <text evidence="1">Cofactor biosynthesis; ubiquinone biosynthesis.</text>
</comment>
<comment type="subcellular location">
    <subcellularLocation>
        <location evidence="1">Cytoplasm</location>
    </subcellularLocation>
</comment>
<comment type="similarity">
    <text evidence="1">Belongs to the UbiC family.</text>
</comment>
<feature type="chain" id="PRO_0000255901" description="Probable chorismate pyruvate-lyase">
    <location>
        <begin position="1"/>
        <end position="190"/>
    </location>
</feature>
<feature type="binding site" evidence="1">
    <location>
        <position position="74"/>
    </location>
    <ligand>
        <name>substrate</name>
    </ligand>
</feature>
<feature type="binding site" evidence="1">
    <location>
        <position position="112"/>
    </location>
    <ligand>
        <name>substrate</name>
    </ligand>
</feature>
<feature type="binding site" evidence="1">
    <location>
        <position position="173"/>
    </location>
    <ligand>
        <name>substrate</name>
    </ligand>
</feature>
<dbReference type="EC" id="4.1.3.40" evidence="1"/>
<dbReference type="EMBL" id="BX640427">
    <property type="protein sequence ID" value="CAE36752.1"/>
    <property type="molecule type" value="Genomic_DNA"/>
</dbReference>
<dbReference type="RefSeq" id="WP_010926548.1">
    <property type="nucleotide sequence ID" value="NC_002928.3"/>
</dbReference>
<dbReference type="SMR" id="Q7WAC9"/>
<dbReference type="KEGG" id="bpa:BPP1450"/>
<dbReference type="HOGENOM" id="CLU_096824_0_0_4"/>
<dbReference type="UniPathway" id="UPA00232"/>
<dbReference type="Proteomes" id="UP000001421">
    <property type="component" value="Chromosome"/>
</dbReference>
<dbReference type="GO" id="GO:0005829">
    <property type="term" value="C:cytosol"/>
    <property type="evidence" value="ECO:0007669"/>
    <property type="project" value="TreeGrafter"/>
</dbReference>
<dbReference type="GO" id="GO:0008813">
    <property type="term" value="F:chorismate lyase activity"/>
    <property type="evidence" value="ECO:0007669"/>
    <property type="project" value="UniProtKB-UniRule"/>
</dbReference>
<dbReference type="GO" id="GO:0042866">
    <property type="term" value="P:pyruvate biosynthetic process"/>
    <property type="evidence" value="ECO:0007669"/>
    <property type="project" value="UniProtKB-UniRule"/>
</dbReference>
<dbReference type="GO" id="GO:0006744">
    <property type="term" value="P:ubiquinone biosynthetic process"/>
    <property type="evidence" value="ECO:0007669"/>
    <property type="project" value="UniProtKB-UniRule"/>
</dbReference>
<dbReference type="Gene3D" id="3.40.1410.10">
    <property type="entry name" value="Chorismate lyase-like"/>
    <property type="match status" value="1"/>
</dbReference>
<dbReference type="HAMAP" id="MF_01632">
    <property type="entry name" value="UbiC"/>
    <property type="match status" value="1"/>
</dbReference>
<dbReference type="InterPro" id="IPR007440">
    <property type="entry name" value="Chorismate--pyruvate_lyase"/>
</dbReference>
<dbReference type="InterPro" id="IPR028978">
    <property type="entry name" value="Chorismate_lyase_/UTRA_dom_sf"/>
</dbReference>
<dbReference type="PANTHER" id="PTHR38683">
    <property type="entry name" value="CHORISMATE PYRUVATE-LYASE"/>
    <property type="match status" value="1"/>
</dbReference>
<dbReference type="PANTHER" id="PTHR38683:SF1">
    <property type="entry name" value="CHORISMATE PYRUVATE-LYASE"/>
    <property type="match status" value="1"/>
</dbReference>
<dbReference type="Pfam" id="PF04345">
    <property type="entry name" value="Chor_lyase"/>
    <property type="match status" value="1"/>
</dbReference>
<dbReference type="SUPFAM" id="SSF64288">
    <property type="entry name" value="Chorismate lyase-like"/>
    <property type="match status" value="1"/>
</dbReference>
<reference key="1">
    <citation type="journal article" date="2003" name="Nat. Genet.">
        <title>Comparative analysis of the genome sequences of Bordetella pertussis, Bordetella parapertussis and Bordetella bronchiseptica.</title>
        <authorList>
            <person name="Parkhill J."/>
            <person name="Sebaihia M."/>
            <person name="Preston A."/>
            <person name="Murphy L.D."/>
            <person name="Thomson N.R."/>
            <person name="Harris D.E."/>
            <person name="Holden M.T.G."/>
            <person name="Churcher C.M."/>
            <person name="Bentley S.D."/>
            <person name="Mungall K.L."/>
            <person name="Cerdeno-Tarraga A.-M."/>
            <person name="Temple L."/>
            <person name="James K.D."/>
            <person name="Harris B."/>
            <person name="Quail M.A."/>
            <person name="Achtman M."/>
            <person name="Atkin R."/>
            <person name="Baker S."/>
            <person name="Basham D."/>
            <person name="Bason N."/>
            <person name="Cherevach I."/>
            <person name="Chillingworth T."/>
            <person name="Collins M."/>
            <person name="Cronin A."/>
            <person name="Davis P."/>
            <person name="Doggett J."/>
            <person name="Feltwell T."/>
            <person name="Goble A."/>
            <person name="Hamlin N."/>
            <person name="Hauser H."/>
            <person name="Holroyd S."/>
            <person name="Jagels K."/>
            <person name="Leather S."/>
            <person name="Moule S."/>
            <person name="Norberczak H."/>
            <person name="O'Neil S."/>
            <person name="Ormond D."/>
            <person name="Price C."/>
            <person name="Rabbinowitsch E."/>
            <person name="Rutter S."/>
            <person name="Sanders M."/>
            <person name="Saunders D."/>
            <person name="Seeger K."/>
            <person name="Sharp S."/>
            <person name="Simmonds M."/>
            <person name="Skelton J."/>
            <person name="Squares R."/>
            <person name="Squares S."/>
            <person name="Stevens K."/>
            <person name="Unwin L."/>
            <person name="Whitehead S."/>
            <person name="Barrell B.G."/>
            <person name="Maskell D.J."/>
        </authorList>
    </citation>
    <scope>NUCLEOTIDE SEQUENCE [LARGE SCALE GENOMIC DNA]</scope>
    <source>
        <strain>12822 / ATCC BAA-587 / NCTC 13253</strain>
    </source>
</reference>
<organism>
    <name type="scientific">Bordetella parapertussis (strain 12822 / ATCC BAA-587 / NCTC 13253)</name>
    <dbReference type="NCBI Taxonomy" id="257311"/>
    <lineage>
        <taxon>Bacteria</taxon>
        <taxon>Pseudomonadati</taxon>
        <taxon>Pseudomonadota</taxon>
        <taxon>Betaproteobacteria</taxon>
        <taxon>Burkholderiales</taxon>
        <taxon>Alcaligenaceae</taxon>
        <taxon>Bordetella</taxon>
    </lineage>
</organism>